<gene>
    <name type="primary">rsrp1</name>
    <name type="ORF">zgc:136474</name>
</gene>
<evidence type="ECO:0000250" key="1">
    <source>
        <dbReference type="UniProtKB" id="Q9BUV0"/>
    </source>
</evidence>
<evidence type="ECO:0000256" key="2">
    <source>
        <dbReference type="SAM" id="MobiDB-lite"/>
    </source>
</evidence>
<evidence type="ECO:0000305" key="3"/>
<name>RSRP1_DANRE</name>
<feature type="chain" id="PRO_0000297622" description="Arginine/serine-rich protein 1">
    <location>
        <begin position="1"/>
        <end position="320"/>
    </location>
</feature>
<feature type="region of interest" description="Disordered" evidence="2">
    <location>
        <begin position="1"/>
        <end position="180"/>
    </location>
</feature>
<feature type="region of interest" description="Disordered" evidence="2">
    <location>
        <begin position="215"/>
        <end position="299"/>
    </location>
</feature>
<feature type="compositionally biased region" description="Basic and acidic residues" evidence="2">
    <location>
        <begin position="1"/>
        <end position="22"/>
    </location>
</feature>
<feature type="compositionally biased region" description="Low complexity" evidence="2">
    <location>
        <begin position="24"/>
        <end position="48"/>
    </location>
</feature>
<feature type="compositionally biased region" description="Low complexity" evidence="2">
    <location>
        <begin position="56"/>
        <end position="74"/>
    </location>
</feature>
<feature type="compositionally biased region" description="Basic residues" evidence="2">
    <location>
        <begin position="75"/>
        <end position="102"/>
    </location>
</feature>
<feature type="compositionally biased region" description="Basic residues" evidence="2">
    <location>
        <begin position="114"/>
        <end position="158"/>
    </location>
</feature>
<feature type="compositionally biased region" description="Basic residues" evidence="2">
    <location>
        <begin position="166"/>
        <end position="175"/>
    </location>
</feature>
<feature type="compositionally biased region" description="Basic and acidic residues" evidence="2">
    <location>
        <begin position="215"/>
        <end position="238"/>
    </location>
</feature>
<feature type="compositionally biased region" description="Polar residues" evidence="2">
    <location>
        <begin position="271"/>
        <end position="293"/>
    </location>
</feature>
<feature type="modified residue" description="Phosphoserine" evidence="1">
    <location>
        <position position="135"/>
    </location>
</feature>
<feature type="modified residue" description="Phosphoserine" evidence="1">
    <location>
        <position position="137"/>
    </location>
</feature>
<organism>
    <name type="scientific">Danio rerio</name>
    <name type="common">Zebrafish</name>
    <name type="synonym">Brachydanio rerio</name>
    <dbReference type="NCBI Taxonomy" id="7955"/>
    <lineage>
        <taxon>Eukaryota</taxon>
        <taxon>Metazoa</taxon>
        <taxon>Chordata</taxon>
        <taxon>Craniata</taxon>
        <taxon>Vertebrata</taxon>
        <taxon>Euteleostomi</taxon>
        <taxon>Actinopterygii</taxon>
        <taxon>Neopterygii</taxon>
        <taxon>Teleostei</taxon>
        <taxon>Ostariophysi</taxon>
        <taxon>Cypriniformes</taxon>
        <taxon>Danionidae</taxon>
        <taxon>Danioninae</taxon>
        <taxon>Danio</taxon>
    </lineage>
</organism>
<proteinExistence type="evidence at transcript level"/>
<protein>
    <recommendedName>
        <fullName>Arginine/serine-rich protein 1</fullName>
    </recommendedName>
</protein>
<comment type="function">
    <text evidence="1">Probably acts as a spliceosomal factor that contributes to spliceosome assembly and regulates the isoform switching of proteins such as PARP6.</text>
</comment>
<comment type="subcellular location">
    <subcellularLocation>
        <location evidence="1">Nucleus</location>
    </subcellularLocation>
</comment>
<comment type="PTM">
    <text evidence="1">Phosphorylated. Phosphorylation at Ser-135 and Ser-137 mediates the interaction with spliceosome proteins.</text>
</comment>
<comment type="similarity">
    <text evidence="3">Belongs to the RSRP family.</text>
</comment>
<accession>Q1ECZ9</accession>
<keyword id="KW-0539">Nucleus</keyword>
<keyword id="KW-0597">Phosphoprotein</keyword>
<keyword id="KW-1185">Reference proteome</keyword>
<dbReference type="EMBL" id="BC117606">
    <property type="protein sequence ID" value="AAI17607.1"/>
    <property type="molecule type" value="mRNA"/>
</dbReference>
<dbReference type="SMR" id="Q1ECZ9"/>
<dbReference type="FunCoup" id="Q1ECZ9">
    <property type="interactions" value="2"/>
</dbReference>
<dbReference type="STRING" id="7955.ENSDARP00000043344"/>
<dbReference type="PaxDb" id="7955-ENSDARP00000043344"/>
<dbReference type="AGR" id="ZFIN:ZDB-GENE-060616-210"/>
<dbReference type="ZFIN" id="ZDB-GENE-060616-210">
    <property type="gene designation" value="rsrp1"/>
</dbReference>
<dbReference type="eggNOG" id="ENOG502S6J6">
    <property type="taxonomic scope" value="Eukaryota"/>
</dbReference>
<dbReference type="InParanoid" id="Q1ECZ9"/>
<dbReference type="PRO" id="PR:Q1ECZ9"/>
<dbReference type="Proteomes" id="UP000000437">
    <property type="component" value="Unplaced"/>
</dbReference>
<dbReference type="GO" id="GO:0005634">
    <property type="term" value="C:nucleus"/>
    <property type="evidence" value="ECO:0000250"/>
    <property type="project" value="UniProtKB"/>
</dbReference>
<dbReference type="GO" id="GO:0000245">
    <property type="term" value="P:spliceosomal complex assembly"/>
    <property type="evidence" value="ECO:0000250"/>
    <property type="project" value="UniProtKB"/>
</dbReference>
<dbReference type="InterPro" id="IPR029656">
    <property type="entry name" value="RSRP1"/>
</dbReference>
<dbReference type="PANTHER" id="PTHR47622">
    <property type="entry name" value="ARGININE/SERINE-RICH PROTEIN 1"/>
    <property type="match status" value="1"/>
</dbReference>
<dbReference type="PANTHER" id="PTHR47622:SF1">
    <property type="entry name" value="ARGININE_SERINE-RICH PROTEIN 1"/>
    <property type="match status" value="1"/>
</dbReference>
<dbReference type="Pfam" id="PF17069">
    <property type="entry name" value="RSRP"/>
    <property type="match status" value="1"/>
</dbReference>
<sequence length="320" mass="36370">MKTEASPGRLHEDVKLIFDKKAPSGRSSSCSSSSSSSSGSSYSSSRGSRSSRRSRTSSSSRSSSSGSSSSSNSRSRSRPRCSGRVHCRHRHRSPPRRYRARSRSYSPSPESSSRRRHYYRRSRSPYRYSRRYRRSPSRSRSRSPPHWRGSRFIGRYRCRFSQSPRRSPRPYRSRSRSRERSIRLSLEEKKYLLNVAKANAARILGVQNLELPESLKEMEQQEERKRRSSSDEEERVRVDLAAQKTPAQVNGGAADDEAETAQTSPKRKQIVFSNNNAIAKPSSSPTLSDSKVTSRADIVPYKRPFGQWVPIGKSSSANKR</sequence>
<reference key="1">
    <citation type="submission" date="2006-06" db="EMBL/GenBank/DDBJ databases">
        <authorList>
            <consortium name="NIH - Zebrafish Gene Collection (ZGC) project"/>
        </authorList>
    </citation>
    <scope>NUCLEOTIDE SEQUENCE [LARGE SCALE MRNA]</scope>
    <source>
        <tissue>Embryo</tissue>
    </source>
</reference>